<accession>Q117D3</accession>
<evidence type="ECO:0000255" key="1">
    <source>
        <dbReference type="HAMAP-Rule" id="MF_00613"/>
    </source>
</evidence>
<dbReference type="EMBL" id="CP000393">
    <property type="protein sequence ID" value="ABG50391.1"/>
    <property type="molecule type" value="Genomic_DNA"/>
</dbReference>
<dbReference type="RefSeq" id="WP_011610778.1">
    <property type="nucleotide sequence ID" value="NC_008312.1"/>
</dbReference>
<dbReference type="SMR" id="Q117D3"/>
<dbReference type="STRING" id="203124.Tery_1014"/>
<dbReference type="KEGG" id="ter:Tery_1014"/>
<dbReference type="eggNOG" id="ENOG503313D">
    <property type="taxonomic scope" value="Bacteria"/>
</dbReference>
<dbReference type="HOGENOM" id="CLU_136462_2_1_3"/>
<dbReference type="GO" id="GO:0009538">
    <property type="term" value="C:photosystem I reaction center"/>
    <property type="evidence" value="ECO:0007669"/>
    <property type="project" value="InterPro"/>
</dbReference>
<dbReference type="GO" id="GO:0031676">
    <property type="term" value="C:plasma membrane-derived thylakoid membrane"/>
    <property type="evidence" value="ECO:0007669"/>
    <property type="project" value="UniProtKB-SubCell"/>
</dbReference>
<dbReference type="GO" id="GO:0015979">
    <property type="term" value="P:photosynthesis"/>
    <property type="evidence" value="ECO:0007669"/>
    <property type="project" value="UniProtKB-UniRule"/>
</dbReference>
<dbReference type="Gene3D" id="2.30.30.50">
    <property type="match status" value="1"/>
</dbReference>
<dbReference type="HAMAP" id="MF_00613">
    <property type="entry name" value="PSI_PsaE"/>
    <property type="match status" value="1"/>
</dbReference>
<dbReference type="InterPro" id="IPR008990">
    <property type="entry name" value="Elect_transpt_acc-like_dom_sf"/>
</dbReference>
<dbReference type="InterPro" id="IPR003375">
    <property type="entry name" value="PSI_PsaE"/>
</dbReference>
<dbReference type="NCBIfam" id="NF002745">
    <property type="entry name" value="PRK02749.1"/>
    <property type="match status" value="1"/>
</dbReference>
<dbReference type="PANTHER" id="PTHR34549">
    <property type="entry name" value="PHOTOSYSTEM I REACTION CENTER SUBUNIT IV A, CHLOROPLASTIC-RELATED"/>
    <property type="match status" value="1"/>
</dbReference>
<dbReference type="PANTHER" id="PTHR34549:SF2">
    <property type="entry name" value="PHOTOSYSTEM I SUBUNIT IV"/>
    <property type="match status" value="1"/>
</dbReference>
<dbReference type="Pfam" id="PF02427">
    <property type="entry name" value="PSI_PsaE"/>
    <property type="match status" value="1"/>
</dbReference>
<dbReference type="SUPFAM" id="SSF50090">
    <property type="entry name" value="Electron transport accessory proteins"/>
    <property type="match status" value="1"/>
</dbReference>
<proteinExistence type="inferred from homology"/>
<comment type="function">
    <text evidence="1">Stabilizes the interaction between PsaC and the PSI core, assists the docking of the ferredoxin to PSI and interacts with ferredoxin-NADP oxidoreductase.</text>
</comment>
<comment type="subcellular location">
    <subcellularLocation>
        <location evidence="1">Cellular thylakoid membrane</location>
        <topology evidence="1">Peripheral membrane protein</topology>
    </subcellularLocation>
</comment>
<comment type="similarity">
    <text evidence="1">Belongs to the PsaE family.</text>
</comment>
<sequence>MVKRGSKVRILRKESYWYQDVGTVASVDKSGIKYPVIVRFDKVNYAGSSGSPTGVNTNNFAIDEVVEIS</sequence>
<gene>
    <name evidence="1" type="primary">psaE</name>
    <name type="ordered locus">Tery_1014</name>
</gene>
<protein>
    <recommendedName>
        <fullName evidence="1">Photosystem I reaction center subunit IV</fullName>
    </recommendedName>
</protein>
<reference key="1">
    <citation type="journal article" date="2015" name="Proc. Natl. Acad. Sci. U.S.A.">
        <title>Trichodesmium genome maintains abundant, widespread noncoding DNA in situ, despite oligotrophic lifestyle.</title>
        <authorList>
            <person name="Walworth N."/>
            <person name="Pfreundt U."/>
            <person name="Nelson W.C."/>
            <person name="Mincer T."/>
            <person name="Heidelberg J.F."/>
            <person name="Fu F."/>
            <person name="Waterbury J.B."/>
            <person name="Glavina del Rio T."/>
            <person name="Goodwin L."/>
            <person name="Kyrpides N.C."/>
            <person name="Land M.L."/>
            <person name="Woyke T."/>
            <person name="Hutchins D.A."/>
            <person name="Hess W.R."/>
            <person name="Webb E.A."/>
        </authorList>
    </citation>
    <scope>NUCLEOTIDE SEQUENCE [LARGE SCALE GENOMIC DNA]</scope>
    <source>
        <strain>IMS101</strain>
    </source>
</reference>
<keyword id="KW-0472">Membrane</keyword>
<keyword id="KW-0602">Photosynthesis</keyword>
<keyword id="KW-0603">Photosystem I</keyword>
<keyword id="KW-0793">Thylakoid</keyword>
<organism>
    <name type="scientific">Trichodesmium erythraeum (strain IMS101)</name>
    <dbReference type="NCBI Taxonomy" id="203124"/>
    <lineage>
        <taxon>Bacteria</taxon>
        <taxon>Bacillati</taxon>
        <taxon>Cyanobacteriota</taxon>
        <taxon>Cyanophyceae</taxon>
        <taxon>Oscillatoriophycideae</taxon>
        <taxon>Oscillatoriales</taxon>
        <taxon>Microcoleaceae</taxon>
        <taxon>Trichodesmium</taxon>
    </lineage>
</organism>
<feature type="chain" id="PRO_1000061316" description="Photosystem I reaction center subunit IV">
    <location>
        <begin position="1"/>
        <end position="69"/>
    </location>
</feature>
<name>PSAE_TRIEI</name>